<sequence>MTEYILLLIGTVLVNNFVLVKFLGLCPFMGVSKKLETAIGMGLATTFVLTMASVCAYLVESYILEPLHIEYLRTMSFILVIAVVVQFTEMVVHKTSPTLYRLLGIFLPLITTNCAVLGVALLNINENHSFVESIIYGFGAAVGFSLVLILFASMRERISAADVPAPFKGASIAMITAGLMSLAFMGFTGLVK</sequence>
<accession>Q7MM81</accession>
<feature type="chain" id="PRO_0000214302" description="Ion-translocating oxidoreductase complex subunit A">
    <location>
        <begin position="1"/>
        <end position="192"/>
    </location>
</feature>
<feature type="transmembrane region" description="Helical" evidence="1">
    <location>
        <begin position="5"/>
        <end position="25"/>
    </location>
</feature>
<feature type="transmembrane region" description="Helical" evidence="1">
    <location>
        <begin position="39"/>
        <end position="59"/>
    </location>
</feature>
<feature type="transmembrane region" description="Helical" evidence="1">
    <location>
        <begin position="72"/>
        <end position="92"/>
    </location>
</feature>
<feature type="transmembrane region" description="Helical" evidence="1">
    <location>
        <begin position="102"/>
        <end position="122"/>
    </location>
</feature>
<feature type="transmembrane region" description="Helical" evidence="1">
    <location>
        <begin position="134"/>
        <end position="154"/>
    </location>
</feature>
<feature type="transmembrane region" description="Helical" evidence="1">
    <location>
        <begin position="171"/>
        <end position="191"/>
    </location>
</feature>
<comment type="function">
    <text evidence="1">Part of a membrane-bound complex that couples electron transfer with translocation of ions across the membrane.</text>
</comment>
<comment type="subunit">
    <text evidence="1">The complex is composed of six subunits: RnfA, RnfB, RnfC, RnfD, RnfE and RnfG.</text>
</comment>
<comment type="subcellular location">
    <subcellularLocation>
        <location evidence="1">Cell inner membrane</location>
        <topology evidence="1">Multi-pass membrane protein</topology>
    </subcellularLocation>
</comment>
<comment type="similarity">
    <text evidence="1">Belongs to the NqrDE/RnfAE family.</text>
</comment>
<comment type="sequence caution" evidence="2">
    <conflict type="erroneous initiation">
        <sequence resource="EMBL-CDS" id="BAC93956"/>
    </conflict>
</comment>
<proteinExistence type="inferred from homology"/>
<organism>
    <name type="scientific">Vibrio vulnificus (strain YJ016)</name>
    <dbReference type="NCBI Taxonomy" id="196600"/>
    <lineage>
        <taxon>Bacteria</taxon>
        <taxon>Pseudomonadati</taxon>
        <taxon>Pseudomonadota</taxon>
        <taxon>Gammaproteobacteria</taxon>
        <taxon>Vibrionales</taxon>
        <taxon>Vibrionaceae</taxon>
        <taxon>Vibrio</taxon>
    </lineage>
</organism>
<dbReference type="EC" id="7.-.-.-" evidence="1"/>
<dbReference type="EMBL" id="BA000037">
    <property type="protein sequence ID" value="BAC93956.1"/>
    <property type="status" value="ALT_INIT"/>
    <property type="molecule type" value="Genomic_DNA"/>
</dbReference>
<dbReference type="SMR" id="Q7MM81"/>
<dbReference type="STRING" id="672.VV93_v1c11120"/>
<dbReference type="KEGG" id="vvy:VV1192"/>
<dbReference type="eggNOG" id="COG4657">
    <property type="taxonomic scope" value="Bacteria"/>
</dbReference>
<dbReference type="HOGENOM" id="CLU_095255_1_0_6"/>
<dbReference type="Proteomes" id="UP000002675">
    <property type="component" value="Chromosome I"/>
</dbReference>
<dbReference type="GO" id="GO:0005886">
    <property type="term" value="C:plasma membrane"/>
    <property type="evidence" value="ECO:0007669"/>
    <property type="project" value="UniProtKB-SubCell"/>
</dbReference>
<dbReference type="GO" id="GO:0022900">
    <property type="term" value="P:electron transport chain"/>
    <property type="evidence" value="ECO:0007669"/>
    <property type="project" value="UniProtKB-UniRule"/>
</dbReference>
<dbReference type="HAMAP" id="MF_00459">
    <property type="entry name" value="RsxA_RnfA"/>
    <property type="match status" value="1"/>
</dbReference>
<dbReference type="InterPro" id="IPR011293">
    <property type="entry name" value="Ion_transpt_RnfA/RsxA"/>
</dbReference>
<dbReference type="InterPro" id="IPR003667">
    <property type="entry name" value="NqrDE/RnfAE"/>
</dbReference>
<dbReference type="InterPro" id="IPR050133">
    <property type="entry name" value="NqrDE/RnfAE_oxidrdctase"/>
</dbReference>
<dbReference type="NCBIfam" id="NF003481">
    <property type="entry name" value="PRK05151.1"/>
    <property type="match status" value="1"/>
</dbReference>
<dbReference type="NCBIfam" id="TIGR01943">
    <property type="entry name" value="rnfA"/>
    <property type="match status" value="1"/>
</dbReference>
<dbReference type="PANTHER" id="PTHR30335">
    <property type="entry name" value="INTEGRAL MEMBRANE PROTEIN OF SOXR-REDUCING COMPLEX"/>
    <property type="match status" value="1"/>
</dbReference>
<dbReference type="PANTHER" id="PTHR30335:SF0">
    <property type="entry name" value="ION-TRANSLOCATING OXIDOREDUCTASE COMPLEX SUBUNIT A"/>
    <property type="match status" value="1"/>
</dbReference>
<dbReference type="Pfam" id="PF02508">
    <property type="entry name" value="Rnf-Nqr"/>
    <property type="match status" value="1"/>
</dbReference>
<dbReference type="PIRSF" id="PIRSF006102">
    <property type="entry name" value="NQR_DE"/>
    <property type="match status" value="1"/>
</dbReference>
<evidence type="ECO:0000255" key="1">
    <source>
        <dbReference type="HAMAP-Rule" id="MF_00459"/>
    </source>
</evidence>
<evidence type="ECO:0000305" key="2"/>
<protein>
    <recommendedName>
        <fullName evidence="1">Ion-translocating oxidoreductase complex subunit A</fullName>
        <ecNumber evidence="1">7.-.-.-</ecNumber>
    </recommendedName>
    <alternativeName>
        <fullName evidence="1">Rnf electron transport complex subunit A</fullName>
    </alternativeName>
</protein>
<name>RNFA_VIBVY</name>
<gene>
    <name evidence="1" type="primary">rnfA</name>
    <name type="ordered locus">VV1192</name>
</gene>
<reference key="1">
    <citation type="journal article" date="2003" name="Genome Res.">
        <title>Comparative genome analysis of Vibrio vulnificus, a marine pathogen.</title>
        <authorList>
            <person name="Chen C.-Y."/>
            <person name="Wu K.-M."/>
            <person name="Chang Y.-C."/>
            <person name="Chang C.-H."/>
            <person name="Tsai H.-C."/>
            <person name="Liao T.-L."/>
            <person name="Liu Y.-M."/>
            <person name="Chen H.-J."/>
            <person name="Shen A.B.-T."/>
            <person name="Li J.-C."/>
            <person name="Su T.-L."/>
            <person name="Shao C.-P."/>
            <person name="Lee C.-T."/>
            <person name="Hor L.-I."/>
            <person name="Tsai S.-F."/>
        </authorList>
    </citation>
    <scope>NUCLEOTIDE SEQUENCE [LARGE SCALE GENOMIC DNA]</scope>
    <source>
        <strain>YJ016</strain>
    </source>
</reference>
<keyword id="KW-0997">Cell inner membrane</keyword>
<keyword id="KW-1003">Cell membrane</keyword>
<keyword id="KW-0249">Electron transport</keyword>
<keyword id="KW-0472">Membrane</keyword>
<keyword id="KW-1278">Translocase</keyword>
<keyword id="KW-0812">Transmembrane</keyword>
<keyword id="KW-1133">Transmembrane helix</keyword>
<keyword id="KW-0813">Transport</keyword>